<organism>
    <name type="scientific">Rattus norvegicus</name>
    <name type="common">Rat</name>
    <dbReference type="NCBI Taxonomy" id="10116"/>
    <lineage>
        <taxon>Eukaryota</taxon>
        <taxon>Metazoa</taxon>
        <taxon>Chordata</taxon>
        <taxon>Craniata</taxon>
        <taxon>Vertebrata</taxon>
        <taxon>Euteleostomi</taxon>
        <taxon>Mammalia</taxon>
        <taxon>Eutheria</taxon>
        <taxon>Euarchontoglires</taxon>
        <taxon>Glires</taxon>
        <taxon>Rodentia</taxon>
        <taxon>Myomorpha</taxon>
        <taxon>Muroidea</taxon>
        <taxon>Muridae</taxon>
        <taxon>Murinae</taxon>
        <taxon>Rattus</taxon>
    </lineage>
</organism>
<accession>P32214</accession>
<accession>P32213</accession>
<feature type="signal peptide" evidence="2">
    <location>
        <begin position="1"/>
        <end position="24"/>
    </location>
</feature>
<feature type="chain" id="PRO_0000012810" description="Calcitonin receptor">
    <location>
        <begin position="25"/>
        <end position="516"/>
    </location>
</feature>
<feature type="topological domain" description="Extracellular" evidence="4">
    <location>
        <begin position="25"/>
        <end position="146"/>
    </location>
</feature>
<feature type="transmembrane region" description="Helical; Name=1" evidence="1">
    <location>
        <begin position="147"/>
        <end position="169"/>
    </location>
</feature>
<feature type="topological domain" description="Cytoplasmic" evidence="4">
    <location>
        <begin position="170"/>
        <end position="181"/>
    </location>
</feature>
<feature type="transmembrane region" description="Helical; Name=2" evidence="1">
    <location>
        <begin position="182"/>
        <end position="202"/>
    </location>
</feature>
<feature type="topological domain" description="Extracellular" evidence="4">
    <location>
        <begin position="203"/>
        <end position="256"/>
    </location>
</feature>
<feature type="transmembrane region" description="Helical; Name=3" evidence="1">
    <location>
        <begin position="257"/>
        <end position="279"/>
    </location>
</feature>
<feature type="topological domain" description="Cytoplasmic" evidence="4">
    <location>
        <begin position="280"/>
        <end position="296"/>
    </location>
</feature>
<feature type="transmembrane region" description="Helical; Name=4" evidence="1">
    <location>
        <begin position="297"/>
        <end position="317"/>
    </location>
</feature>
<feature type="topological domain" description="Extracellular" evidence="4">
    <location>
        <begin position="318"/>
        <end position="333"/>
    </location>
</feature>
<feature type="transmembrane region" description="Helical; Name=5" evidence="1">
    <location>
        <begin position="334"/>
        <end position="357"/>
    </location>
</feature>
<feature type="topological domain" description="Cytoplasmic" evidence="4">
    <location>
        <begin position="358"/>
        <end position="377"/>
    </location>
</feature>
<feature type="transmembrane region" description="Helical; Name=6" evidence="1">
    <location>
        <begin position="378"/>
        <end position="396"/>
    </location>
</feature>
<feature type="topological domain" description="Extracellular" evidence="4">
    <location>
        <begin position="397"/>
        <end position="404"/>
    </location>
</feature>
<feature type="transmembrane region" description="Helical; Name=7" evidence="1">
    <location>
        <begin position="405"/>
        <end position="431"/>
    </location>
</feature>
<feature type="topological domain" description="Cytoplasmic" evidence="4">
    <location>
        <begin position="432"/>
        <end position="516"/>
    </location>
</feature>
<feature type="region of interest" description="Disordered" evidence="3">
    <location>
        <begin position="489"/>
        <end position="516"/>
    </location>
</feature>
<feature type="glycosylation site" description="N-linked (GlcNAc...) asparagine" evidence="2">
    <location>
        <position position="28"/>
    </location>
</feature>
<feature type="glycosylation site" description="N-linked (GlcNAc...) asparagine" evidence="2">
    <location>
        <position position="73"/>
    </location>
</feature>
<feature type="glycosylation site" description="N-linked (GlcNAc...) asparagine" evidence="2">
    <location>
        <position position="125"/>
    </location>
</feature>
<feature type="glycosylation site" description="N-linked (GlcNAc...) asparagine" evidence="2">
    <location>
        <position position="130"/>
    </location>
</feature>
<feature type="disulfide bond" evidence="1">
    <location>
        <begin position="55"/>
        <end position="81"/>
    </location>
</feature>
<feature type="disulfide bond" evidence="1">
    <location>
        <begin position="72"/>
        <end position="112"/>
    </location>
</feature>
<feature type="disulfide bond" evidence="1">
    <location>
        <begin position="95"/>
        <end position="134"/>
    </location>
</feature>
<feature type="disulfide bond" evidence="1">
    <location>
        <begin position="256"/>
        <end position="326"/>
    </location>
</feature>
<feature type="splice variant" id="VSP_001995" description="In isoform A." evidence="4">
    <location>
        <begin position="217"/>
        <end position="253"/>
    </location>
</feature>
<feature type="sequence conflict" description="In Ref. 2; AAA03031/AAA03030." evidence="4" ref="2">
    <original>L</original>
    <variation>S</variation>
    <location>
        <position position="148"/>
    </location>
</feature>
<feature type="sequence conflict" description="In Ref. 2; AAA03031/AAA03030." evidence="4" ref="2">
    <location>
        <position position="459"/>
    </location>
</feature>
<feature type="sequence conflict" description="In Ref. 2; AAA03031/AAA03030." evidence="4" ref="2">
    <original>L</original>
    <variation>R</variation>
    <location>
        <position position="479"/>
    </location>
</feature>
<dbReference type="EMBL" id="L14618">
    <property type="protein sequence ID" value="AAA65965.1"/>
    <property type="molecule type" value="mRNA"/>
</dbReference>
<dbReference type="EMBL" id="L14617">
    <property type="protein sequence ID" value="AAA65964.1"/>
    <property type="molecule type" value="mRNA"/>
</dbReference>
<dbReference type="EMBL" id="L13040">
    <property type="protein sequence ID" value="AAA03031.1"/>
    <property type="molecule type" value="mRNA"/>
</dbReference>
<dbReference type="EMBL" id="L13041">
    <property type="protein sequence ID" value="AAA03030.1"/>
    <property type="molecule type" value="mRNA"/>
</dbReference>
<dbReference type="PIR" id="A37430">
    <property type="entry name" value="A37430"/>
</dbReference>
<dbReference type="PIR" id="I60800">
    <property type="entry name" value="I60800"/>
</dbReference>
<dbReference type="PIR" id="S33746">
    <property type="entry name" value="S33746"/>
</dbReference>
<dbReference type="RefSeq" id="NP_001029187.1">
    <property type="nucleotide sequence ID" value="NM_001034015.1"/>
</dbReference>
<dbReference type="RefSeq" id="NP_446268.2">
    <property type="nucleotide sequence ID" value="NM_053816.2"/>
</dbReference>
<dbReference type="SMR" id="P32214"/>
<dbReference type="BioGRID" id="250474">
    <property type="interactions" value="1"/>
</dbReference>
<dbReference type="ComplexPortal" id="CPX-246">
    <property type="entry name" value="Amylin receptor 1 complex"/>
</dbReference>
<dbReference type="ComplexPortal" id="CPX-247">
    <property type="entry name" value="Amylin receptor 2 complex"/>
</dbReference>
<dbReference type="ComplexPortal" id="CPX-249">
    <property type="entry name" value="Amylin receptor 3 complex"/>
</dbReference>
<dbReference type="FunCoup" id="P32214">
    <property type="interactions" value="668"/>
</dbReference>
<dbReference type="STRING" id="10116.ENSRNOP00000013910"/>
<dbReference type="BindingDB" id="P32214"/>
<dbReference type="ChEMBL" id="CHEMBL2204"/>
<dbReference type="GuidetoPHARMACOLOGY" id="43"/>
<dbReference type="GlyCosmos" id="P32214">
    <property type="glycosylation" value="4 sites, No reported glycans"/>
</dbReference>
<dbReference type="GlyGen" id="P32214">
    <property type="glycosylation" value="5 sites"/>
</dbReference>
<dbReference type="PhosphoSitePlus" id="P32214"/>
<dbReference type="PaxDb" id="10116-ENSRNOP00000013910"/>
<dbReference type="GeneID" id="116506"/>
<dbReference type="KEGG" id="rno:116506"/>
<dbReference type="UCSC" id="RGD:621001">
    <molecule id="P32214-1"/>
    <property type="organism name" value="rat"/>
</dbReference>
<dbReference type="AGR" id="RGD:621001"/>
<dbReference type="CTD" id="799"/>
<dbReference type="RGD" id="621001">
    <property type="gene designation" value="Calcr"/>
</dbReference>
<dbReference type="eggNOG" id="KOG4564">
    <property type="taxonomic scope" value="Eukaryota"/>
</dbReference>
<dbReference type="HOGENOM" id="CLU_002753_4_2_1"/>
<dbReference type="InParanoid" id="P32214"/>
<dbReference type="OrthoDB" id="16753at2759"/>
<dbReference type="PhylomeDB" id="P32214"/>
<dbReference type="Reactome" id="R-RNO-419812">
    <property type="pathway name" value="Calcitonin-like ligand receptors"/>
</dbReference>
<dbReference type="PRO" id="PR:P32214"/>
<dbReference type="Proteomes" id="UP000002494">
    <property type="component" value="Unplaced"/>
</dbReference>
<dbReference type="GO" id="GO:0001669">
    <property type="term" value="C:acrosomal vesicle"/>
    <property type="evidence" value="ECO:0000266"/>
    <property type="project" value="RGD"/>
</dbReference>
<dbReference type="GO" id="GO:0150056">
    <property type="term" value="C:amylin receptor complex 1"/>
    <property type="evidence" value="ECO:0000266"/>
    <property type="project" value="RGD"/>
</dbReference>
<dbReference type="GO" id="GO:0150057">
    <property type="term" value="C:amylin receptor complex 2"/>
    <property type="evidence" value="ECO:0000266"/>
    <property type="project" value="RGD"/>
</dbReference>
<dbReference type="GO" id="GO:0150058">
    <property type="term" value="C:amylin receptor complex 3"/>
    <property type="evidence" value="ECO:0000266"/>
    <property type="project" value="RGD"/>
</dbReference>
<dbReference type="GO" id="GO:0030424">
    <property type="term" value="C:axon"/>
    <property type="evidence" value="ECO:0000314"/>
    <property type="project" value="RGD"/>
</dbReference>
<dbReference type="GO" id="GO:0005929">
    <property type="term" value="C:cilium"/>
    <property type="evidence" value="ECO:0000266"/>
    <property type="project" value="RGD"/>
</dbReference>
<dbReference type="GO" id="GO:0043025">
    <property type="term" value="C:neuronal cell body"/>
    <property type="evidence" value="ECO:0000314"/>
    <property type="project" value="RGD"/>
</dbReference>
<dbReference type="GO" id="GO:0005886">
    <property type="term" value="C:plasma membrane"/>
    <property type="evidence" value="ECO:0000318"/>
    <property type="project" value="GO_Central"/>
</dbReference>
<dbReference type="GO" id="GO:0097643">
    <property type="term" value="F:amylin receptor activity"/>
    <property type="evidence" value="ECO:0000266"/>
    <property type="project" value="RGD"/>
</dbReference>
<dbReference type="GO" id="GO:0001540">
    <property type="term" value="F:amyloid-beta binding"/>
    <property type="evidence" value="ECO:0000266"/>
    <property type="project" value="RGD"/>
</dbReference>
<dbReference type="GO" id="GO:0032841">
    <property type="term" value="F:calcitonin binding"/>
    <property type="evidence" value="ECO:0000314"/>
    <property type="project" value="RGD"/>
</dbReference>
<dbReference type="GO" id="GO:0097642">
    <property type="term" value="F:calcitonin family receptor activity"/>
    <property type="evidence" value="ECO:0000266"/>
    <property type="project" value="RGD"/>
</dbReference>
<dbReference type="GO" id="GO:0001635">
    <property type="term" value="F:calcitonin gene-related peptide receptor activity"/>
    <property type="evidence" value="ECO:0000266"/>
    <property type="project" value="RGD"/>
</dbReference>
<dbReference type="GO" id="GO:0004948">
    <property type="term" value="F:calcitonin receptor activity"/>
    <property type="evidence" value="ECO:0000314"/>
    <property type="project" value="RGD"/>
</dbReference>
<dbReference type="GO" id="GO:0007189">
    <property type="term" value="P:adenylate cyclase-activating G protein-coupled receptor signaling pathway"/>
    <property type="evidence" value="ECO:0000266"/>
    <property type="project" value="RGD"/>
</dbReference>
<dbReference type="GO" id="GO:0007188">
    <property type="term" value="P:adenylate cyclase-modulating G protein-coupled receptor signaling pathway"/>
    <property type="evidence" value="ECO:0000314"/>
    <property type="project" value="RGD"/>
</dbReference>
<dbReference type="GO" id="GO:0150059">
    <property type="term" value="P:amylin receptor 1 signaling pathway"/>
    <property type="evidence" value="ECO:0000266"/>
    <property type="project" value="RGD"/>
</dbReference>
<dbReference type="GO" id="GO:0150060">
    <property type="term" value="P:amylin receptor 2 signaling pathway"/>
    <property type="evidence" value="ECO:0000266"/>
    <property type="project" value="RGD"/>
</dbReference>
<dbReference type="GO" id="GO:0150061">
    <property type="term" value="P:amylin receptor 3 signaling pathway"/>
    <property type="evidence" value="ECO:0000266"/>
    <property type="project" value="RGD"/>
</dbReference>
<dbReference type="GO" id="GO:0097647">
    <property type="term" value="P:amylin receptor signaling pathway"/>
    <property type="evidence" value="ECO:0000266"/>
    <property type="project" value="RGD"/>
</dbReference>
<dbReference type="GO" id="GO:0097646">
    <property type="term" value="P:calcitonin family receptor signaling pathway"/>
    <property type="evidence" value="ECO:0000266"/>
    <property type="project" value="RGD"/>
</dbReference>
<dbReference type="GO" id="GO:1990408">
    <property type="term" value="P:calcitonin gene-related peptide receptor signaling pathway"/>
    <property type="evidence" value="ECO:0000266"/>
    <property type="project" value="RGD"/>
</dbReference>
<dbReference type="GO" id="GO:0007166">
    <property type="term" value="P:cell surface receptor signaling pathway"/>
    <property type="evidence" value="ECO:0007669"/>
    <property type="project" value="InterPro"/>
</dbReference>
<dbReference type="GO" id="GO:0071560">
    <property type="term" value="P:cellular response to transforming growth factor beta stimulus"/>
    <property type="evidence" value="ECO:0000270"/>
    <property type="project" value="RGD"/>
</dbReference>
<dbReference type="GO" id="GO:0071356">
    <property type="term" value="P:cellular response to tumor necrosis factor"/>
    <property type="evidence" value="ECO:0000270"/>
    <property type="project" value="RGD"/>
</dbReference>
<dbReference type="GO" id="GO:1903131">
    <property type="term" value="P:mononuclear cell differentiation"/>
    <property type="evidence" value="ECO:0000270"/>
    <property type="project" value="RGD"/>
</dbReference>
<dbReference type="GO" id="GO:0030279">
    <property type="term" value="P:negative regulation of ossification"/>
    <property type="evidence" value="ECO:0000266"/>
    <property type="project" value="RGD"/>
</dbReference>
<dbReference type="GO" id="GO:0001503">
    <property type="term" value="P:ossification"/>
    <property type="evidence" value="ECO:0000266"/>
    <property type="project" value="RGD"/>
</dbReference>
<dbReference type="GO" id="GO:0030316">
    <property type="term" value="P:osteoclast differentiation"/>
    <property type="evidence" value="ECO:0000266"/>
    <property type="project" value="RGD"/>
</dbReference>
<dbReference type="GO" id="GO:0050850">
    <property type="term" value="P:positive regulation of calcium-mediated signaling"/>
    <property type="evidence" value="ECO:0000266"/>
    <property type="project" value="RGD"/>
</dbReference>
<dbReference type="GO" id="GO:0141163">
    <property type="term" value="P:positive regulation of cAMP/PKA signal transduction"/>
    <property type="evidence" value="ECO:0000266"/>
    <property type="project" value="RGD"/>
</dbReference>
<dbReference type="GO" id="GO:0007204">
    <property type="term" value="P:positive regulation of cytosolic calcium ion concentration"/>
    <property type="evidence" value="ECO:0000266"/>
    <property type="project" value="RGD"/>
</dbReference>
<dbReference type="GO" id="GO:0070374">
    <property type="term" value="P:positive regulation of ERK1 and ERK2 cascade"/>
    <property type="evidence" value="ECO:0000266"/>
    <property type="project" value="RGD"/>
</dbReference>
<dbReference type="GO" id="GO:0010628">
    <property type="term" value="P:positive regulation of gene expression"/>
    <property type="evidence" value="ECO:0000266"/>
    <property type="project" value="RGD"/>
</dbReference>
<dbReference type="GO" id="GO:0051897">
    <property type="term" value="P:positive regulation of phosphatidylinositol 3-kinase/protein kinase B signal transduction"/>
    <property type="evidence" value="ECO:0000266"/>
    <property type="project" value="RGD"/>
</dbReference>
<dbReference type="GO" id="GO:0043488">
    <property type="term" value="P:regulation of mRNA stability"/>
    <property type="evidence" value="ECO:0000266"/>
    <property type="project" value="RGD"/>
</dbReference>
<dbReference type="GO" id="GO:1904645">
    <property type="term" value="P:response to amyloid-beta"/>
    <property type="evidence" value="ECO:0000266"/>
    <property type="project" value="RGD"/>
</dbReference>
<dbReference type="GO" id="GO:0051384">
    <property type="term" value="P:response to glucocorticoid"/>
    <property type="evidence" value="ECO:0000266"/>
    <property type="project" value="RGD"/>
</dbReference>
<dbReference type="CDD" id="cd15274">
    <property type="entry name" value="7tmB1_calcitonin_R"/>
    <property type="match status" value="1"/>
</dbReference>
<dbReference type="FunFam" id="4.10.1240.10:FF:000012">
    <property type="entry name" value="Calcitonin receptor"/>
    <property type="match status" value="1"/>
</dbReference>
<dbReference type="Gene3D" id="4.10.1240.10">
    <property type="entry name" value="GPCR, family 2, extracellular hormone receptor domain"/>
    <property type="match status" value="1"/>
</dbReference>
<dbReference type="Gene3D" id="1.20.1070.10">
    <property type="entry name" value="Rhodopsin 7-helix transmembrane proteins"/>
    <property type="match status" value="1"/>
</dbReference>
<dbReference type="InterPro" id="IPR050332">
    <property type="entry name" value="GPCR_2"/>
</dbReference>
<dbReference type="InterPro" id="IPR017981">
    <property type="entry name" value="GPCR_2-like_7TM"/>
</dbReference>
<dbReference type="InterPro" id="IPR001688">
    <property type="entry name" value="GPCR_2_calcitonin_rcpt"/>
</dbReference>
<dbReference type="InterPro" id="IPR003287">
    <property type="entry name" value="GPCR_2_calcitonin_rcpt_fam"/>
</dbReference>
<dbReference type="InterPro" id="IPR036445">
    <property type="entry name" value="GPCR_2_extracell_dom_sf"/>
</dbReference>
<dbReference type="InterPro" id="IPR001879">
    <property type="entry name" value="GPCR_2_extracellular_dom"/>
</dbReference>
<dbReference type="InterPro" id="IPR000832">
    <property type="entry name" value="GPCR_2_secretin-like"/>
</dbReference>
<dbReference type="InterPro" id="IPR017983">
    <property type="entry name" value="GPCR_2_secretin-like_CS"/>
</dbReference>
<dbReference type="PANTHER" id="PTHR45620:SF8">
    <property type="entry name" value="CALCITONIN RECEPTOR"/>
    <property type="match status" value="1"/>
</dbReference>
<dbReference type="PANTHER" id="PTHR45620">
    <property type="entry name" value="PDF RECEPTOR-LIKE PROTEIN-RELATED"/>
    <property type="match status" value="1"/>
</dbReference>
<dbReference type="Pfam" id="PF00002">
    <property type="entry name" value="7tm_2"/>
    <property type="match status" value="1"/>
</dbReference>
<dbReference type="Pfam" id="PF02793">
    <property type="entry name" value="HRM"/>
    <property type="match status" value="1"/>
</dbReference>
<dbReference type="PRINTS" id="PR00361">
    <property type="entry name" value="CALCITONINR"/>
</dbReference>
<dbReference type="PRINTS" id="PR01350">
    <property type="entry name" value="CTRFAMILY"/>
</dbReference>
<dbReference type="PRINTS" id="PR00249">
    <property type="entry name" value="GPCRSECRETIN"/>
</dbReference>
<dbReference type="SMART" id="SM00008">
    <property type="entry name" value="HormR"/>
    <property type="match status" value="1"/>
</dbReference>
<dbReference type="SUPFAM" id="SSF81321">
    <property type="entry name" value="Family A G protein-coupled receptor-like"/>
    <property type="match status" value="1"/>
</dbReference>
<dbReference type="SUPFAM" id="SSF111418">
    <property type="entry name" value="Hormone receptor domain"/>
    <property type="match status" value="1"/>
</dbReference>
<dbReference type="PROSITE" id="PS00649">
    <property type="entry name" value="G_PROTEIN_RECEP_F2_1"/>
    <property type="match status" value="1"/>
</dbReference>
<dbReference type="PROSITE" id="PS00650">
    <property type="entry name" value="G_PROTEIN_RECEP_F2_2"/>
    <property type="match status" value="1"/>
</dbReference>
<dbReference type="PROSITE" id="PS50227">
    <property type="entry name" value="G_PROTEIN_RECEP_F2_3"/>
    <property type="match status" value="1"/>
</dbReference>
<dbReference type="PROSITE" id="PS50261">
    <property type="entry name" value="G_PROTEIN_RECEP_F2_4"/>
    <property type="match status" value="1"/>
</dbReference>
<evidence type="ECO:0000250" key="1">
    <source>
        <dbReference type="UniProtKB" id="P30988"/>
    </source>
</evidence>
<evidence type="ECO:0000255" key="2"/>
<evidence type="ECO:0000256" key="3">
    <source>
        <dbReference type="SAM" id="MobiDB-lite"/>
    </source>
</evidence>
<evidence type="ECO:0000305" key="4"/>
<evidence type="ECO:0000312" key="5">
    <source>
        <dbReference type="RGD" id="621001"/>
    </source>
</evidence>
<reference key="1">
    <citation type="journal article" date="1993" name="FEBS Lett.">
        <title>Molecular cloning of two receptors from rat brain with high affinity for salmon calcitonin.</title>
        <authorList>
            <person name="Albrandt K.G."/>
            <person name="Mull E."/>
            <person name="Brady E.M."/>
            <person name="Herich J."/>
            <person name="Moore C.X."/>
            <person name="Beaumont K."/>
        </authorList>
    </citation>
    <scope>NUCLEOTIDE SEQUENCE [MRNA]</scope>
    <source>
        <strain>Wistar</strain>
        <tissue>Brain</tissue>
    </source>
</reference>
<reference key="2">
    <citation type="journal article" date="1993" name="Mol. Endocrinol.">
        <title>Identification of brain isoforms of the rat calcitonin receptor.</title>
        <authorList>
            <person name="Sexton P.M."/>
            <person name="Housammi S."/>
            <person name="Hilton J.M."/>
            <person name="O'Keeffe L.M."/>
            <person name="Center R.J."/>
            <person name="Gillespie M.T."/>
            <person name="Darcy P."/>
            <person name="Findlay D.M."/>
        </authorList>
    </citation>
    <scope>NUCLEOTIDE SEQUENCE [MRNA]</scope>
    <source>
        <tissue>Brain</tissue>
    </source>
</reference>
<sequence>MRFLLLNRFTLLLLLLVSPTPVLQAPTNLTDSGLDQEPFLYLVGRKKLLDAQYKCYDRIQQLPPYEGEGPYCNRTWDGWMCWDDTPAGVMSYQHCPDYFPDFDPTEKVSKYCDENGEWFRHPDSNRTWSNYTLCNAFTPDKLHNAYVLYYLALVGHSMSIAALIASMGIFLFFKNLSCQRVTLHKNMFLTYILNSIIIIIHLVEVVPNGDLVRRDPMHIFHHNTYMWTMQWELSPPLPLSAHEGKMDPHDSEVISCKILHFFHQYMMACNYFWMLCEGIYLHTLIVMAVFTEDQRLRWYYLLGWGFPIVPTIIHAITRAVYYNDNCWLSTETHLLYIIHGPVMAALVVNFFFLLNIVRVLVTKMRQTHEAEAYMYLKAVKATMVLVPLLGIQFVVFPWRPSNKVLGKIYDYLMHSLIHFQGFFVATIYCFCNHEVQVTLKRQWAQFKIQWSHRWGRRRRPTNRVVSAPRAVAFAEPGGLPIYICHQEPRNPPVSNNEGEEGTEMIPMNVIQQDSSA</sequence>
<comment type="function">
    <text evidence="1">G protein-coupled receptor activated by ligand peptides amylin (IAPP), calcitonin (CT/CALCA) and calcitonin gene-related peptide type 1 (CGRP1/CALCA). CALCR interacts with receptor-activity-modifying proteins RAMP1, 2 and 3 to form receptor complexes AMYR1, 2 and 3, respectively. IAPP, CT and CGRP1 activate CALCR and AMYRs with distinct modes of receptor activation resulting in specific phenotypes. Ligand binding causes a conformation change that triggers signaling via guanine nucleotide-binding proteins (G proteins) and modulates the activity of downstream effectors. Activates cAMP-dependent pathway.</text>
</comment>
<comment type="subunit">
    <text evidence="1">Heterodimer of CALCR and RAMP1, RAMP2 or RAMP3; the receptor complexes function as AMYR1, AMYR2 and AMYR3 receptors, respectively, and respond to amylin/IAPP, calcitonin/CT and CGRP1 ligands. Interacts with GPRASP2.</text>
</comment>
<comment type="subcellular location">
    <subcellularLocation>
        <location evidence="1">Cell membrane</location>
        <topology evidence="1">Multi-pass membrane protein</topology>
    </subcellularLocation>
</comment>
<comment type="alternative products">
    <event type="alternative splicing"/>
    <isoform>
        <id>P32214-1</id>
        <name>B</name>
        <sequence type="displayed"/>
    </isoform>
    <isoform>
        <id>P32214-2</id>
        <name>A</name>
        <sequence type="described" ref="VSP_001995"/>
    </isoform>
</comment>
<comment type="similarity">
    <text evidence="4">Belongs to the G-protein coupled receptor 2 family.</text>
</comment>
<protein>
    <recommendedName>
        <fullName evidence="4">Calcitonin receptor</fullName>
        <shortName>CT-R</shortName>
    </recommendedName>
    <alternativeName>
        <fullName>C1A/C1B</fullName>
    </alternativeName>
</protein>
<name>CALCR_RAT</name>
<proteinExistence type="evidence at transcript level"/>
<gene>
    <name evidence="5" type="primary">Calcr</name>
</gene>
<keyword id="KW-0025">Alternative splicing</keyword>
<keyword id="KW-1003">Cell membrane</keyword>
<keyword id="KW-1015">Disulfide bond</keyword>
<keyword id="KW-0297">G-protein coupled receptor</keyword>
<keyword id="KW-0325">Glycoprotein</keyword>
<keyword id="KW-0472">Membrane</keyword>
<keyword id="KW-0675">Receptor</keyword>
<keyword id="KW-1185">Reference proteome</keyword>
<keyword id="KW-0732">Signal</keyword>
<keyword id="KW-0807">Transducer</keyword>
<keyword id="KW-0812">Transmembrane</keyword>
<keyword id="KW-1133">Transmembrane helix</keyword>